<feature type="chain" id="PRO_0000061013" description="Cytochrome b">
    <location>
        <begin position="1"/>
        <end position="380"/>
    </location>
</feature>
<feature type="transmembrane region" description="Helical" evidence="2">
    <location>
        <begin position="34"/>
        <end position="54"/>
    </location>
</feature>
<feature type="transmembrane region" description="Helical" evidence="2">
    <location>
        <begin position="78"/>
        <end position="99"/>
    </location>
</feature>
<feature type="transmembrane region" description="Helical" evidence="2">
    <location>
        <begin position="114"/>
        <end position="134"/>
    </location>
</feature>
<feature type="transmembrane region" description="Helical" evidence="2">
    <location>
        <begin position="179"/>
        <end position="199"/>
    </location>
</feature>
<feature type="transmembrane region" description="Helical" evidence="2">
    <location>
        <begin position="227"/>
        <end position="247"/>
    </location>
</feature>
<feature type="transmembrane region" description="Helical" evidence="2">
    <location>
        <begin position="289"/>
        <end position="309"/>
    </location>
</feature>
<feature type="transmembrane region" description="Helical" evidence="2">
    <location>
        <begin position="321"/>
        <end position="341"/>
    </location>
</feature>
<feature type="transmembrane region" description="Helical" evidence="2">
    <location>
        <begin position="348"/>
        <end position="368"/>
    </location>
</feature>
<feature type="binding site" description="axial binding residue" evidence="2">
    <location>
        <position position="84"/>
    </location>
    <ligand>
        <name>heme b</name>
        <dbReference type="ChEBI" id="CHEBI:60344"/>
        <label>b562</label>
    </ligand>
    <ligandPart>
        <name>Fe</name>
        <dbReference type="ChEBI" id="CHEBI:18248"/>
    </ligandPart>
</feature>
<feature type="binding site" description="axial binding residue" evidence="2">
    <location>
        <position position="98"/>
    </location>
    <ligand>
        <name>heme b</name>
        <dbReference type="ChEBI" id="CHEBI:60344"/>
        <label>b566</label>
    </ligand>
    <ligandPart>
        <name>Fe</name>
        <dbReference type="ChEBI" id="CHEBI:18248"/>
    </ligandPart>
</feature>
<feature type="binding site" description="axial binding residue" evidence="2">
    <location>
        <position position="183"/>
    </location>
    <ligand>
        <name>heme b</name>
        <dbReference type="ChEBI" id="CHEBI:60344"/>
        <label>b562</label>
    </ligand>
    <ligandPart>
        <name>Fe</name>
        <dbReference type="ChEBI" id="CHEBI:18248"/>
    </ligandPart>
</feature>
<feature type="binding site" description="axial binding residue" evidence="2">
    <location>
        <position position="197"/>
    </location>
    <ligand>
        <name>heme b</name>
        <dbReference type="ChEBI" id="CHEBI:60344"/>
        <label>b566</label>
    </ligand>
    <ligandPart>
        <name>Fe</name>
        <dbReference type="ChEBI" id="CHEBI:18248"/>
    </ligandPart>
</feature>
<feature type="binding site" evidence="2">
    <location>
        <position position="202"/>
    </location>
    <ligand>
        <name>a ubiquinone</name>
        <dbReference type="ChEBI" id="CHEBI:16389"/>
    </ligand>
</feature>
<gene>
    <name type="primary">MT-CYB</name>
    <name type="synonym">COB</name>
    <name type="synonym">CYTB</name>
    <name type="synonym">MTCYB</name>
</gene>
<organism>
    <name type="scientific">Bugeranus carunculatus</name>
    <name type="common">Wattled crane</name>
    <name type="synonym">Grus carunculatus</name>
    <dbReference type="NCBI Taxonomy" id="9118"/>
    <lineage>
        <taxon>Eukaryota</taxon>
        <taxon>Metazoa</taxon>
        <taxon>Chordata</taxon>
        <taxon>Craniata</taxon>
        <taxon>Vertebrata</taxon>
        <taxon>Euteleostomi</taxon>
        <taxon>Archelosauria</taxon>
        <taxon>Archosauria</taxon>
        <taxon>Dinosauria</taxon>
        <taxon>Saurischia</taxon>
        <taxon>Theropoda</taxon>
        <taxon>Coelurosauria</taxon>
        <taxon>Aves</taxon>
        <taxon>Neognathae</taxon>
        <taxon>Neoaves</taxon>
        <taxon>Gruiformes</taxon>
        <taxon>Gruidae</taxon>
        <taxon>Grus</taxon>
    </lineage>
</organism>
<comment type="function">
    <text evidence="2">Component of the ubiquinol-cytochrome c reductase complex (complex III or cytochrome b-c1 complex) that is part of the mitochondrial respiratory chain. The b-c1 complex mediates electron transfer from ubiquinol to cytochrome c. Contributes to the generation of a proton gradient across the mitochondrial membrane that is then used for ATP synthesis.</text>
</comment>
<comment type="cofactor">
    <cofactor evidence="2">
        <name>heme b</name>
        <dbReference type="ChEBI" id="CHEBI:60344"/>
    </cofactor>
    <text evidence="2">Binds 2 heme b groups non-covalently.</text>
</comment>
<comment type="subunit">
    <text evidence="2">The cytochrome bc1 complex contains 11 subunits: 3 respiratory subunits (MT-CYB, CYC1 and UQCRFS1), 2 core proteins (UQCRC1 and UQCRC2) and 6 low-molecular weight proteins (UQCRH/QCR6, UQCRB/QCR7, UQCRQ/QCR8, UQCR10/QCR9, UQCR11/QCR10 and a cleavage product of UQCRFS1). This cytochrome bc1 complex then forms a dimer.</text>
</comment>
<comment type="subcellular location">
    <subcellularLocation>
        <location evidence="2">Mitochondrion inner membrane</location>
        <topology evidence="2">Multi-pass membrane protein</topology>
    </subcellularLocation>
</comment>
<comment type="miscellaneous">
    <text evidence="1">Heme 1 (or BL or b562) is low-potential and absorbs at about 562 nm, and heme 2 (or BH or b566) is high-potential and absorbs at about 566 nm.</text>
</comment>
<comment type="similarity">
    <text evidence="3 4">Belongs to the cytochrome b family.</text>
</comment>
<comment type="caution">
    <text evidence="2">The full-length protein contains only eight transmembrane helices, not nine as predicted by bioinformatics tools.</text>
</comment>
<evidence type="ECO:0000250" key="1"/>
<evidence type="ECO:0000250" key="2">
    <source>
        <dbReference type="UniProtKB" id="P00157"/>
    </source>
</evidence>
<evidence type="ECO:0000255" key="3">
    <source>
        <dbReference type="PROSITE-ProRule" id="PRU00967"/>
    </source>
</evidence>
<evidence type="ECO:0000255" key="4">
    <source>
        <dbReference type="PROSITE-ProRule" id="PRU00968"/>
    </source>
</evidence>
<keyword id="KW-0249">Electron transport</keyword>
<keyword id="KW-0349">Heme</keyword>
<keyword id="KW-0408">Iron</keyword>
<keyword id="KW-0472">Membrane</keyword>
<keyword id="KW-0479">Metal-binding</keyword>
<keyword id="KW-0496">Mitochondrion</keyword>
<keyword id="KW-0999">Mitochondrion inner membrane</keyword>
<keyword id="KW-0679">Respiratory chain</keyword>
<keyword id="KW-0812">Transmembrane</keyword>
<keyword id="KW-1133">Transmembrane helix</keyword>
<keyword id="KW-0813">Transport</keyword>
<keyword id="KW-0830">Ubiquinone</keyword>
<sequence length="380" mass="42585">MAPNLRKSHPLLKMINNSLIDLPTPSNISAWWNFGSLLGICLATQILTGLLLAAHYTADTTLAFSSVAHTCRNVQHGWLIRNLHANGASFFFICIYLHIGRGLYYGSYLYKETWNTGVILLLTLMATAFVGYVLPWGQMSFWGATVITNLFSAVPYIGQTLVEWAWGGFSVDNPTLTRFFTLHFLLPFMIMGLTLIHLTFLHESGSNNPLGIVSNCDKIPFHPYFSLKDILGFMLMLLPLMTLALFSPNLLGDPENFTPANPLVTPPHIKPEWYFLFAYAVLRSIPNKLGGVLALAASVLILFLAPLLHKSKQRTMTFRPFSQLLFWTLTANVLILTWVGSQPVERPFIIIGQLASLTYFTILLILFPIIGALENKMLNY</sequence>
<accession>Q33954</accession>
<dbReference type="EMBL" id="U27556">
    <property type="protein sequence ID" value="AAA69786.1"/>
    <property type="molecule type" value="Genomic_DNA"/>
</dbReference>
<dbReference type="RefSeq" id="YP_007624317.1">
    <property type="nucleotide sequence ID" value="NC_020571.1"/>
</dbReference>
<dbReference type="SMR" id="Q33954"/>
<dbReference type="GeneID" id="14840860"/>
<dbReference type="CTD" id="4519"/>
<dbReference type="GO" id="GO:0005743">
    <property type="term" value="C:mitochondrial inner membrane"/>
    <property type="evidence" value="ECO:0007669"/>
    <property type="project" value="UniProtKB-SubCell"/>
</dbReference>
<dbReference type="GO" id="GO:0045275">
    <property type="term" value="C:respiratory chain complex III"/>
    <property type="evidence" value="ECO:0007669"/>
    <property type="project" value="InterPro"/>
</dbReference>
<dbReference type="GO" id="GO:0046872">
    <property type="term" value="F:metal ion binding"/>
    <property type="evidence" value="ECO:0007669"/>
    <property type="project" value="UniProtKB-KW"/>
</dbReference>
<dbReference type="GO" id="GO:0008121">
    <property type="term" value="F:ubiquinol-cytochrome-c reductase activity"/>
    <property type="evidence" value="ECO:0007669"/>
    <property type="project" value="InterPro"/>
</dbReference>
<dbReference type="GO" id="GO:0006122">
    <property type="term" value="P:mitochondrial electron transport, ubiquinol to cytochrome c"/>
    <property type="evidence" value="ECO:0007669"/>
    <property type="project" value="TreeGrafter"/>
</dbReference>
<dbReference type="CDD" id="cd00290">
    <property type="entry name" value="cytochrome_b_C"/>
    <property type="match status" value="1"/>
</dbReference>
<dbReference type="CDD" id="cd00284">
    <property type="entry name" value="Cytochrome_b_N"/>
    <property type="match status" value="1"/>
</dbReference>
<dbReference type="FunFam" id="1.20.810.10:FF:000002">
    <property type="entry name" value="Cytochrome b"/>
    <property type="match status" value="1"/>
</dbReference>
<dbReference type="Gene3D" id="1.20.810.10">
    <property type="entry name" value="Cytochrome Bc1 Complex, Chain C"/>
    <property type="match status" value="1"/>
</dbReference>
<dbReference type="InterPro" id="IPR005798">
    <property type="entry name" value="Cyt_b/b6_C"/>
</dbReference>
<dbReference type="InterPro" id="IPR036150">
    <property type="entry name" value="Cyt_b/b6_C_sf"/>
</dbReference>
<dbReference type="InterPro" id="IPR005797">
    <property type="entry name" value="Cyt_b/b6_N"/>
</dbReference>
<dbReference type="InterPro" id="IPR027387">
    <property type="entry name" value="Cytb/b6-like_sf"/>
</dbReference>
<dbReference type="InterPro" id="IPR030689">
    <property type="entry name" value="Cytochrome_b"/>
</dbReference>
<dbReference type="InterPro" id="IPR048260">
    <property type="entry name" value="Cytochrome_b_C_euk/bac"/>
</dbReference>
<dbReference type="InterPro" id="IPR048259">
    <property type="entry name" value="Cytochrome_b_N_euk/bac"/>
</dbReference>
<dbReference type="InterPro" id="IPR016174">
    <property type="entry name" value="Di-haem_cyt_TM"/>
</dbReference>
<dbReference type="PANTHER" id="PTHR19271">
    <property type="entry name" value="CYTOCHROME B"/>
    <property type="match status" value="1"/>
</dbReference>
<dbReference type="PANTHER" id="PTHR19271:SF16">
    <property type="entry name" value="CYTOCHROME B"/>
    <property type="match status" value="1"/>
</dbReference>
<dbReference type="Pfam" id="PF00032">
    <property type="entry name" value="Cytochrom_B_C"/>
    <property type="match status" value="1"/>
</dbReference>
<dbReference type="Pfam" id="PF00033">
    <property type="entry name" value="Cytochrome_B"/>
    <property type="match status" value="1"/>
</dbReference>
<dbReference type="PIRSF" id="PIRSF038885">
    <property type="entry name" value="COB"/>
    <property type="match status" value="1"/>
</dbReference>
<dbReference type="SUPFAM" id="SSF81648">
    <property type="entry name" value="a domain/subunit of cytochrome bc1 complex (Ubiquinol-cytochrome c reductase)"/>
    <property type="match status" value="1"/>
</dbReference>
<dbReference type="SUPFAM" id="SSF81342">
    <property type="entry name" value="Transmembrane di-heme cytochromes"/>
    <property type="match status" value="1"/>
</dbReference>
<dbReference type="PROSITE" id="PS51003">
    <property type="entry name" value="CYTB_CTER"/>
    <property type="match status" value="1"/>
</dbReference>
<dbReference type="PROSITE" id="PS51002">
    <property type="entry name" value="CYTB_NTER"/>
    <property type="match status" value="1"/>
</dbReference>
<protein>
    <recommendedName>
        <fullName>Cytochrome b</fullName>
    </recommendedName>
    <alternativeName>
        <fullName>Complex III subunit 3</fullName>
    </alternativeName>
    <alternativeName>
        <fullName>Complex III subunit III</fullName>
    </alternativeName>
    <alternativeName>
        <fullName>Cytochrome b-c1 complex subunit 3</fullName>
    </alternativeName>
    <alternativeName>
        <fullName>Ubiquinol-cytochrome-c reductase complex cytochrome b subunit</fullName>
    </alternativeName>
</protein>
<geneLocation type="mitochondrion"/>
<reference key="1">
    <citation type="journal article" date="1996" name="Mol. Biol. Evol.">
        <title>Molecular divergence and phylogeny: rates and patterns of cytochrome b evolution in cranes.</title>
        <authorList>
            <person name="Krajewski C.W."/>
            <person name="King D.G."/>
        </authorList>
    </citation>
    <scope>NUCLEOTIDE SEQUENCE [GENOMIC DNA]</scope>
</reference>
<proteinExistence type="inferred from homology"/>
<name>CYB_BUGCA</name>